<name>SFSA_SALNS</name>
<organism>
    <name type="scientific">Salmonella newport (strain SL254)</name>
    <dbReference type="NCBI Taxonomy" id="423368"/>
    <lineage>
        <taxon>Bacteria</taxon>
        <taxon>Pseudomonadati</taxon>
        <taxon>Pseudomonadota</taxon>
        <taxon>Gammaproteobacteria</taxon>
        <taxon>Enterobacterales</taxon>
        <taxon>Enterobacteriaceae</taxon>
        <taxon>Salmonella</taxon>
    </lineage>
</organism>
<keyword id="KW-0238">DNA-binding</keyword>
<dbReference type="EMBL" id="CP001113">
    <property type="protein sequence ID" value="ACF63722.1"/>
    <property type="molecule type" value="Genomic_DNA"/>
</dbReference>
<dbReference type="RefSeq" id="WP_000899412.1">
    <property type="nucleotide sequence ID" value="NZ_CCMR01000003.1"/>
</dbReference>
<dbReference type="SMR" id="B4SUB3"/>
<dbReference type="KEGG" id="see:SNSL254_A0204"/>
<dbReference type="HOGENOM" id="CLU_052299_2_0_6"/>
<dbReference type="Proteomes" id="UP000008824">
    <property type="component" value="Chromosome"/>
</dbReference>
<dbReference type="GO" id="GO:0003677">
    <property type="term" value="F:DNA binding"/>
    <property type="evidence" value="ECO:0007669"/>
    <property type="project" value="UniProtKB-KW"/>
</dbReference>
<dbReference type="CDD" id="cd22359">
    <property type="entry name" value="SfsA-like_bacterial"/>
    <property type="match status" value="1"/>
</dbReference>
<dbReference type="FunFam" id="2.40.50.580:FF:000001">
    <property type="entry name" value="Sugar fermentation stimulation protein A"/>
    <property type="match status" value="1"/>
</dbReference>
<dbReference type="FunFam" id="3.40.1350.60:FF:000001">
    <property type="entry name" value="Sugar fermentation stimulation protein A"/>
    <property type="match status" value="1"/>
</dbReference>
<dbReference type="Gene3D" id="2.40.50.580">
    <property type="match status" value="1"/>
</dbReference>
<dbReference type="Gene3D" id="3.40.1350.60">
    <property type="match status" value="1"/>
</dbReference>
<dbReference type="HAMAP" id="MF_00095">
    <property type="entry name" value="SfsA"/>
    <property type="match status" value="1"/>
</dbReference>
<dbReference type="InterPro" id="IPR005224">
    <property type="entry name" value="SfsA"/>
</dbReference>
<dbReference type="InterPro" id="IPR040452">
    <property type="entry name" value="SfsA_C"/>
</dbReference>
<dbReference type="InterPro" id="IPR041465">
    <property type="entry name" value="SfsA_N"/>
</dbReference>
<dbReference type="NCBIfam" id="TIGR00230">
    <property type="entry name" value="sfsA"/>
    <property type="match status" value="1"/>
</dbReference>
<dbReference type="PANTHER" id="PTHR30545">
    <property type="entry name" value="SUGAR FERMENTATION STIMULATION PROTEIN A"/>
    <property type="match status" value="1"/>
</dbReference>
<dbReference type="PANTHER" id="PTHR30545:SF2">
    <property type="entry name" value="SUGAR FERMENTATION STIMULATION PROTEIN A"/>
    <property type="match status" value="1"/>
</dbReference>
<dbReference type="Pfam" id="PF03749">
    <property type="entry name" value="SfsA"/>
    <property type="match status" value="1"/>
</dbReference>
<dbReference type="Pfam" id="PF17746">
    <property type="entry name" value="SfsA_N"/>
    <property type="match status" value="1"/>
</dbReference>
<reference key="1">
    <citation type="journal article" date="2011" name="J. Bacteriol.">
        <title>Comparative genomics of 28 Salmonella enterica isolates: evidence for CRISPR-mediated adaptive sublineage evolution.</title>
        <authorList>
            <person name="Fricke W.F."/>
            <person name="Mammel M.K."/>
            <person name="McDermott P.F."/>
            <person name="Tartera C."/>
            <person name="White D.G."/>
            <person name="Leclerc J.E."/>
            <person name="Ravel J."/>
            <person name="Cebula T.A."/>
        </authorList>
    </citation>
    <scope>NUCLEOTIDE SEQUENCE [LARGE SCALE GENOMIC DNA]</scope>
    <source>
        <strain>SL254</strain>
    </source>
</reference>
<protein>
    <recommendedName>
        <fullName evidence="1">Sugar fermentation stimulation protein A</fullName>
    </recommendedName>
</protein>
<accession>B4SUB3</accession>
<comment type="function">
    <text evidence="1">Binds to DNA non-specifically. Could be a regulatory factor involved in maltose metabolism.</text>
</comment>
<comment type="similarity">
    <text evidence="1">Belongs to the SfsA family.</text>
</comment>
<sequence>MLFSPPLQRATLIQRYKRFLADVITPDGTTLTLHCPNTGAMTGCATPGDTVWYSTSENTKRKYPHTWELTETQSGAFICVNTLRANQLTKEAIQENRLPALAGYNILKSEVKYGAERSRIDFMLQADFRPDCYIEVKSVTLAEKENGYFPDAITERGQKHLRELMGVAAAGHRAVVVFAVLHSAITRFSPARHIDIKYAQLLSEAQNKGVEVLAYKAELSAQKMELNEPVPITL</sequence>
<gene>
    <name evidence="1" type="primary">sfsA</name>
    <name type="ordered locus">SNSL254_A0204</name>
</gene>
<evidence type="ECO:0000255" key="1">
    <source>
        <dbReference type="HAMAP-Rule" id="MF_00095"/>
    </source>
</evidence>
<feature type="chain" id="PRO_1000093590" description="Sugar fermentation stimulation protein A">
    <location>
        <begin position="1"/>
        <end position="234"/>
    </location>
</feature>
<feature type="DNA-binding region" description="H-T-H motif" evidence="1">
    <location>
        <begin position="201"/>
        <end position="220"/>
    </location>
</feature>
<proteinExistence type="inferred from homology"/>